<organism>
    <name type="scientific">Limosilactobacillus reuteri subsp. reuteri (strain JCM 1112)</name>
    <name type="common">Lactobacillus reuteri</name>
    <dbReference type="NCBI Taxonomy" id="557433"/>
    <lineage>
        <taxon>Bacteria</taxon>
        <taxon>Bacillati</taxon>
        <taxon>Bacillota</taxon>
        <taxon>Bacilli</taxon>
        <taxon>Lactobacillales</taxon>
        <taxon>Lactobacillaceae</taxon>
        <taxon>Limosilactobacillus</taxon>
    </lineage>
</organism>
<feature type="chain" id="PRO_1000115548" description="Trigger factor">
    <location>
        <begin position="1"/>
        <end position="436"/>
    </location>
</feature>
<feature type="domain" description="PPIase FKBP-type" evidence="1">
    <location>
        <begin position="164"/>
        <end position="249"/>
    </location>
</feature>
<protein>
    <recommendedName>
        <fullName evidence="1">Trigger factor</fullName>
        <shortName evidence="1">TF</shortName>
        <ecNumber evidence="1">5.2.1.8</ecNumber>
    </recommendedName>
    <alternativeName>
        <fullName evidence="1">PPIase</fullName>
    </alternativeName>
</protein>
<gene>
    <name evidence="1" type="primary">tig</name>
    <name type="ordered locus">LAR_0629</name>
</gene>
<keyword id="KW-0131">Cell cycle</keyword>
<keyword id="KW-0132">Cell division</keyword>
<keyword id="KW-0143">Chaperone</keyword>
<keyword id="KW-0963">Cytoplasm</keyword>
<keyword id="KW-0413">Isomerase</keyword>
<keyword id="KW-0697">Rotamase</keyword>
<dbReference type="EC" id="5.2.1.8" evidence="1"/>
<dbReference type="EMBL" id="AP007281">
    <property type="protein sequence ID" value="BAG25145.1"/>
    <property type="molecule type" value="Genomic_DNA"/>
</dbReference>
<dbReference type="RefSeq" id="WP_003666837.1">
    <property type="nucleotide sequence ID" value="NC_010609.1"/>
</dbReference>
<dbReference type="SMR" id="B2G6R3"/>
<dbReference type="KEGG" id="lrf:LAR_0629"/>
<dbReference type="HOGENOM" id="CLU_033058_3_2_9"/>
<dbReference type="GO" id="GO:0005737">
    <property type="term" value="C:cytoplasm"/>
    <property type="evidence" value="ECO:0007669"/>
    <property type="project" value="UniProtKB-SubCell"/>
</dbReference>
<dbReference type="GO" id="GO:0003755">
    <property type="term" value="F:peptidyl-prolyl cis-trans isomerase activity"/>
    <property type="evidence" value="ECO:0007669"/>
    <property type="project" value="UniProtKB-UniRule"/>
</dbReference>
<dbReference type="GO" id="GO:0044183">
    <property type="term" value="F:protein folding chaperone"/>
    <property type="evidence" value="ECO:0007669"/>
    <property type="project" value="TreeGrafter"/>
</dbReference>
<dbReference type="GO" id="GO:0043022">
    <property type="term" value="F:ribosome binding"/>
    <property type="evidence" value="ECO:0007669"/>
    <property type="project" value="TreeGrafter"/>
</dbReference>
<dbReference type="GO" id="GO:0051083">
    <property type="term" value="P:'de novo' cotranslational protein folding"/>
    <property type="evidence" value="ECO:0007669"/>
    <property type="project" value="TreeGrafter"/>
</dbReference>
<dbReference type="GO" id="GO:0051301">
    <property type="term" value="P:cell division"/>
    <property type="evidence" value="ECO:0007669"/>
    <property type="project" value="UniProtKB-KW"/>
</dbReference>
<dbReference type="GO" id="GO:0061077">
    <property type="term" value="P:chaperone-mediated protein folding"/>
    <property type="evidence" value="ECO:0007669"/>
    <property type="project" value="TreeGrafter"/>
</dbReference>
<dbReference type="GO" id="GO:0015031">
    <property type="term" value="P:protein transport"/>
    <property type="evidence" value="ECO:0007669"/>
    <property type="project" value="UniProtKB-UniRule"/>
</dbReference>
<dbReference type="GO" id="GO:0043335">
    <property type="term" value="P:protein unfolding"/>
    <property type="evidence" value="ECO:0007669"/>
    <property type="project" value="TreeGrafter"/>
</dbReference>
<dbReference type="FunFam" id="3.10.50.40:FF:000001">
    <property type="entry name" value="Trigger factor"/>
    <property type="match status" value="1"/>
</dbReference>
<dbReference type="Gene3D" id="3.10.50.40">
    <property type="match status" value="1"/>
</dbReference>
<dbReference type="Gene3D" id="3.30.70.1050">
    <property type="entry name" value="Trigger factor ribosome-binding domain"/>
    <property type="match status" value="1"/>
</dbReference>
<dbReference type="Gene3D" id="1.10.3120.10">
    <property type="entry name" value="Trigger factor, C-terminal domain"/>
    <property type="match status" value="1"/>
</dbReference>
<dbReference type="HAMAP" id="MF_00303">
    <property type="entry name" value="Trigger_factor_Tig"/>
    <property type="match status" value="1"/>
</dbReference>
<dbReference type="InterPro" id="IPR046357">
    <property type="entry name" value="PPIase_dom_sf"/>
</dbReference>
<dbReference type="InterPro" id="IPR001179">
    <property type="entry name" value="PPIase_FKBP_dom"/>
</dbReference>
<dbReference type="InterPro" id="IPR005215">
    <property type="entry name" value="Trig_fac"/>
</dbReference>
<dbReference type="InterPro" id="IPR008880">
    <property type="entry name" value="Trigger_fac_C"/>
</dbReference>
<dbReference type="InterPro" id="IPR037041">
    <property type="entry name" value="Trigger_fac_C_sf"/>
</dbReference>
<dbReference type="InterPro" id="IPR008881">
    <property type="entry name" value="Trigger_fac_ribosome-bd_bac"/>
</dbReference>
<dbReference type="InterPro" id="IPR036611">
    <property type="entry name" value="Trigger_fac_ribosome-bd_sf"/>
</dbReference>
<dbReference type="InterPro" id="IPR027304">
    <property type="entry name" value="Trigger_fact/SurA_dom_sf"/>
</dbReference>
<dbReference type="NCBIfam" id="TIGR00115">
    <property type="entry name" value="tig"/>
    <property type="match status" value="1"/>
</dbReference>
<dbReference type="PANTHER" id="PTHR30560">
    <property type="entry name" value="TRIGGER FACTOR CHAPERONE AND PEPTIDYL-PROLYL CIS/TRANS ISOMERASE"/>
    <property type="match status" value="1"/>
</dbReference>
<dbReference type="PANTHER" id="PTHR30560:SF3">
    <property type="entry name" value="TRIGGER FACTOR-LIKE PROTEIN TIG, CHLOROPLASTIC"/>
    <property type="match status" value="1"/>
</dbReference>
<dbReference type="Pfam" id="PF00254">
    <property type="entry name" value="FKBP_C"/>
    <property type="match status" value="1"/>
</dbReference>
<dbReference type="Pfam" id="PF05698">
    <property type="entry name" value="Trigger_C"/>
    <property type="match status" value="1"/>
</dbReference>
<dbReference type="Pfam" id="PF05697">
    <property type="entry name" value="Trigger_N"/>
    <property type="match status" value="1"/>
</dbReference>
<dbReference type="PIRSF" id="PIRSF003095">
    <property type="entry name" value="Trigger_factor"/>
    <property type="match status" value="1"/>
</dbReference>
<dbReference type="SUPFAM" id="SSF54534">
    <property type="entry name" value="FKBP-like"/>
    <property type="match status" value="1"/>
</dbReference>
<dbReference type="SUPFAM" id="SSF109998">
    <property type="entry name" value="Triger factor/SurA peptide-binding domain-like"/>
    <property type="match status" value="1"/>
</dbReference>
<dbReference type="SUPFAM" id="SSF102735">
    <property type="entry name" value="Trigger factor ribosome-binding domain"/>
    <property type="match status" value="1"/>
</dbReference>
<dbReference type="PROSITE" id="PS50059">
    <property type="entry name" value="FKBP_PPIASE"/>
    <property type="match status" value="1"/>
</dbReference>
<accession>B2G6R3</accession>
<sequence length="436" mass="48747">MSAKWERDSDASKGTLTFEIDVDTINKGIDEAFVETRKKITVPGFRKGRVPRQIFNQMYGEESLYQDALNKVLPDAYNEAVKETNIQPVDQPKIDIKSMEKGQPWVLTAEVDVMPEVKLGEYKGMEVPAQDTTVTDADVDDALETKRQQQAELVLKEDKPAEKGDTVVIDYKGSVDGEEFDGGSAENYSLELGSGSFIPGFEDQLIGHNADEDVDVNVTFPEDYHAKNLAGKDALFKVKIHEIKEKQLPELDDDFAKDVDEDVDTLAELKEKTKKQLQEEKDNQAKAAIEDAAINKAVANAEIQDIPQAMLDDDTNRQMQQYLAGMQQQGISPQMYFQITGTKEEDLKKQFANDAAQRVKTNLVLEAIVDDANLDATDEEIAKEISDLAKQYGMEEDAVKKALSKDMLMHDIKIRKAVDLVADSAKQVKDDEKSDK</sequence>
<proteinExistence type="inferred from homology"/>
<reference key="1">
    <citation type="journal article" date="2008" name="DNA Res.">
        <title>Comparative genome analysis of Lactobacillus reuteri and Lactobacillus fermentum reveal a genomic island for reuterin and cobalamin production.</title>
        <authorList>
            <person name="Morita H."/>
            <person name="Toh H."/>
            <person name="Fukuda S."/>
            <person name="Horikawa H."/>
            <person name="Oshima K."/>
            <person name="Suzuki T."/>
            <person name="Murakami M."/>
            <person name="Hisamatsu S."/>
            <person name="Kato Y."/>
            <person name="Takizawa T."/>
            <person name="Fukuoka H."/>
            <person name="Yoshimura T."/>
            <person name="Itoh K."/>
            <person name="O'Sullivan D.J."/>
            <person name="McKay L.L."/>
            <person name="Ohno H."/>
            <person name="Kikuchi J."/>
            <person name="Masaoka T."/>
            <person name="Hattori M."/>
        </authorList>
    </citation>
    <scope>NUCLEOTIDE SEQUENCE [LARGE SCALE GENOMIC DNA]</scope>
    <source>
        <strain>JCM 1112</strain>
    </source>
</reference>
<comment type="function">
    <text evidence="1">Involved in protein export. Acts as a chaperone by maintaining the newly synthesized protein in an open conformation. Functions as a peptidyl-prolyl cis-trans isomerase.</text>
</comment>
<comment type="catalytic activity">
    <reaction evidence="1">
        <text>[protein]-peptidylproline (omega=180) = [protein]-peptidylproline (omega=0)</text>
        <dbReference type="Rhea" id="RHEA:16237"/>
        <dbReference type="Rhea" id="RHEA-COMP:10747"/>
        <dbReference type="Rhea" id="RHEA-COMP:10748"/>
        <dbReference type="ChEBI" id="CHEBI:83833"/>
        <dbReference type="ChEBI" id="CHEBI:83834"/>
        <dbReference type="EC" id="5.2.1.8"/>
    </reaction>
</comment>
<comment type="subcellular location">
    <subcellularLocation>
        <location>Cytoplasm</location>
    </subcellularLocation>
    <text evidence="1">About half TF is bound to the ribosome near the polypeptide exit tunnel while the other half is free in the cytoplasm.</text>
</comment>
<comment type="domain">
    <text evidence="1">Consists of 3 domains; the N-terminus binds the ribosome, the middle domain has PPIase activity, while the C-terminus has intrinsic chaperone activity on its own.</text>
</comment>
<comment type="similarity">
    <text evidence="1">Belongs to the FKBP-type PPIase family. Tig subfamily.</text>
</comment>
<evidence type="ECO:0000255" key="1">
    <source>
        <dbReference type="HAMAP-Rule" id="MF_00303"/>
    </source>
</evidence>
<name>TIG_LIMRJ</name>